<dbReference type="EC" id="3.6.1.41" evidence="1"/>
<dbReference type="EMBL" id="AM933173">
    <property type="protein sequence ID" value="CAR35997.1"/>
    <property type="molecule type" value="Genomic_DNA"/>
</dbReference>
<dbReference type="RefSeq" id="WP_000257211.1">
    <property type="nucleotide sequence ID" value="NC_011274.1"/>
</dbReference>
<dbReference type="SMR" id="B5RGC0"/>
<dbReference type="KEGG" id="seg:SG0090"/>
<dbReference type="HOGENOM" id="CLU_056184_2_0_6"/>
<dbReference type="Proteomes" id="UP000008321">
    <property type="component" value="Chromosome"/>
</dbReference>
<dbReference type="GO" id="GO:0008803">
    <property type="term" value="F:bis(5'-nucleosyl)-tetraphosphatase (symmetrical) activity"/>
    <property type="evidence" value="ECO:0007669"/>
    <property type="project" value="UniProtKB-UniRule"/>
</dbReference>
<dbReference type="CDD" id="cd07422">
    <property type="entry name" value="MPP_ApaH"/>
    <property type="match status" value="1"/>
</dbReference>
<dbReference type="FunFam" id="3.60.21.10:FF:000013">
    <property type="entry name" value="Bis(5'-nucleosyl)-tetraphosphatase, symmetrical"/>
    <property type="match status" value="1"/>
</dbReference>
<dbReference type="Gene3D" id="3.60.21.10">
    <property type="match status" value="1"/>
</dbReference>
<dbReference type="HAMAP" id="MF_00199">
    <property type="entry name" value="ApaH"/>
    <property type="match status" value="1"/>
</dbReference>
<dbReference type="InterPro" id="IPR004617">
    <property type="entry name" value="ApaH"/>
</dbReference>
<dbReference type="InterPro" id="IPR004843">
    <property type="entry name" value="Calcineurin-like_PHP_ApaH"/>
</dbReference>
<dbReference type="InterPro" id="IPR029052">
    <property type="entry name" value="Metallo-depent_PP-like"/>
</dbReference>
<dbReference type="NCBIfam" id="TIGR00668">
    <property type="entry name" value="apaH"/>
    <property type="match status" value="1"/>
</dbReference>
<dbReference type="NCBIfam" id="NF001204">
    <property type="entry name" value="PRK00166.1"/>
    <property type="match status" value="1"/>
</dbReference>
<dbReference type="PANTHER" id="PTHR40942">
    <property type="match status" value="1"/>
</dbReference>
<dbReference type="PANTHER" id="PTHR40942:SF4">
    <property type="entry name" value="CYTOCHROME C5"/>
    <property type="match status" value="1"/>
</dbReference>
<dbReference type="Pfam" id="PF00149">
    <property type="entry name" value="Metallophos"/>
    <property type="match status" value="1"/>
</dbReference>
<dbReference type="PIRSF" id="PIRSF000903">
    <property type="entry name" value="B5n-ttraPtase_sm"/>
    <property type="match status" value="1"/>
</dbReference>
<dbReference type="SUPFAM" id="SSF56300">
    <property type="entry name" value="Metallo-dependent phosphatases"/>
    <property type="match status" value="1"/>
</dbReference>
<comment type="function">
    <text evidence="1">Hydrolyzes diadenosine 5',5'''-P1,P4-tetraphosphate to yield ADP.</text>
</comment>
<comment type="catalytic activity">
    <reaction evidence="1">
        <text>P(1),P(4)-bis(5'-adenosyl) tetraphosphate + H2O = 2 ADP + 2 H(+)</text>
        <dbReference type="Rhea" id="RHEA:24252"/>
        <dbReference type="ChEBI" id="CHEBI:15377"/>
        <dbReference type="ChEBI" id="CHEBI:15378"/>
        <dbReference type="ChEBI" id="CHEBI:58141"/>
        <dbReference type="ChEBI" id="CHEBI:456216"/>
        <dbReference type="EC" id="3.6.1.41"/>
    </reaction>
</comment>
<comment type="similarity">
    <text evidence="1">Belongs to the Ap4A hydrolase family.</text>
</comment>
<name>APAH_SALG2</name>
<keyword id="KW-0378">Hydrolase</keyword>
<proteinExistence type="inferred from homology"/>
<evidence type="ECO:0000255" key="1">
    <source>
        <dbReference type="HAMAP-Rule" id="MF_00199"/>
    </source>
</evidence>
<protein>
    <recommendedName>
        <fullName evidence="1">Bis(5'-nucleosyl)-tetraphosphatase, symmetrical</fullName>
        <ecNumber evidence="1">3.6.1.41</ecNumber>
    </recommendedName>
    <alternativeName>
        <fullName evidence="1">Ap4A hydrolase</fullName>
    </alternativeName>
    <alternativeName>
        <fullName evidence="1">Diadenosine 5',5'''-P1,P4-tetraphosphate pyrophosphohydrolase</fullName>
    </alternativeName>
    <alternativeName>
        <fullName evidence="1">Diadenosine tetraphosphatase</fullName>
    </alternativeName>
</protein>
<accession>B5RGC0</accession>
<reference key="1">
    <citation type="journal article" date="2008" name="Genome Res.">
        <title>Comparative genome analysis of Salmonella enteritidis PT4 and Salmonella gallinarum 287/91 provides insights into evolutionary and host adaptation pathways.</title>
        <authorList>
            <person name="Thomson N.R."/>
            <person name="Clayton D.J."/>
            <person name="Windhorst D."/>
            <person name="Vernikos G."/>
            <person name="Davidson S."/>
            <person name="Churcher C."/>
            <person name="Quail M.A."/>
            <person name="Stevens M."/>
            <person name="Jones M.A."/>
            <person name="Watson M."/>
            <person name="Barron A."/>
            <person name="Layton A."/>
            <person name="Pickard D."/>
            <person name="Kingsley R.A."/>
            <person name="Bignell A."/>
            <person name="Clark L."/>
            <person name="Harris B."/>
            <person name="Ormond D."/>
            <person name="Abdellah Z."/>
            <person name="Brooks K."/>
            <person name="Cherevach I."/>
            <person name="Chillingworth T."/>
            <person name="Woodward J."/>
            <person name="Norberczak H."/>
            <person name="Lord A."/>
            <person name="Arrowsmith C."/>
            <person name="Jagels K."/>
            <person name="Moule S."/>
            <person name="Mungall K."/>
            <person name="Saunders M."/>
            <person name="Whitehead S."/>
            <person name="Chabalgoity J.A."/>
            <person name="Maskell D."/>
            <person name="Humphreys T."/>
            <person name="Roberts M."/>
            <person name="Barrow P.A."/>
            <person name="Dougan G."/>
            <person name="Parkhill J."/>
        </authorList>
    </citation>
    <scope>NUCLEOTIDE SEQUENCE [LARGE SCALE GENOMIC DNA]</scope>
    <source>
        <strain>287/91 / NCTC 13346</strain>
    </source>
</reference>
<feature type="chain" id="PRO_1000099333" description="Bis(5'-nucleosyl)-tetraphosphatase, symmetrical">
    <location>
        <begin position="1"/>
        <end position="282"/>
    </location>
</feature>
<gene>
    <name evidence="1" type="primary">apaH</name>
    <name type="ordered locus">SG0090</name>
</gene>
<organism>
    <name type="scientific">Salmonella gallinarum (strain 287/91 / NCTC 13346)</name>
    <dbReference type="NCBI Taxonomy" id="550538"/>
    <lineage>
        <taxon>Bacteria</taxon>
        <taxon>Pseudomonadati</taxon>
        <taxon>Pseudomonadota</taxon>
        <taxon>Gammaproteobacteria</taxon>
        <taxon>Enterobacterales</taxon>
        <taxon>Enterobacteriaceae</taxon>
        <taxon>Salmonella</taxon>
    </lineage>
</organism>
<sequence>MATYLIGDVHGCYDELIALLQQVEFTPDTDTLWLTGDLVARGPGSLDVLRYVKSLGNSVRLVLGNHDLHLLAVFAGISRNKPKDRLTPLLEAPDADELLNWLRRQPLLQVDEEKKLVMAHAGITPQWDLQTAKECARDVEAVLSSDSYPFFLDAMYGDMPNNWSPELSGLARLRFITNAFTRMRYCFPNGQLDMYSKASPENAPAPLKPWFAIPGPVSEAYSIAFGHWASLEGKGTPEGIYALDTGCCWGGELTCLRWEDKQYFVQPSNRQMDMGEGEAVNA</sequence>